<reference key="1">
    <citation type="journal article" date="2005" name="Nature">
        <title>The map-based sequence of the rice genome.</title>
        <authorList>
            <consortium name="International rice genome sequencing project (IRGSP)"/>
        </authorList>
    </citation>
    <scope>NUCLEOTIDE SEQUENCE [LARGE SCALE GENOMIC DNA]</scope>
    <source>
        <strain>cv. Nipponbare</strain>
    </source>
</reference>
<reference key="2">
    <citation type="journal article" date="2013" name="Rice">
        <title>Improvement of the Oryza sativa Nipponbare reference genome using next generation sequence and optical map data.</title>
        <authorList>
            <person name="Kawahara Y."/>
            <person name="de la Bastide M."/>
            <person name="Hamilton J.P."/>
            <person name="Kanamori H."/>
            <person name="McCombie W.R."/>
            <person name="Ouyang S."/>
            <person name="Schwartz D.C."/>
            <person name="Tanaka T."/>
            <person name="Wu J."/>
            <person name="Zhou S."/>
            <person name="Childs K.L."/>
            <person name="Davidson R.M."/>
            <person name="Lin H."/>
            <person name="Quesada-Ocampo L."/>
            <person name="Vaillancourt B."/>
            <person name="Sakai H."/>
            <person name="Lee S.S."/>
            <person name="Kim J."/>
            <person name="Numa H."/>
            <person name="Itoh T."/>
            <person name="Buell C.R."/>
            <person name="Matsumoto T."/>
        </authorList>
    </citation>
    <scope>GENOME REANNOTATION</scope>
    <source>
        <strain>cv. Nipponbare</strain>
    </source>
</reference>
<name>KAT4_ORYSJ</name>
<comment type="function">
    <text evidence="1">Probable inward-rectifying potassium channel. Assuming opened or closed conformations in response to the voltage difference across the membrane, the channel is activated by hyperpolarization (By similarity).</text>
</comment>
<comment type="subcellular location">
    <subcellularLocation>
        <location evidence="4">Membrane</location>
        <topology evidence="4">Multi-pass membrane protein</topology>
    </subcellularLocation>
</comment>
<comment type="domain">
    <text evidence="1">The segment S4 is probably the voltage-sensor and is characterized by a series of positively charged amino acids. The pore-forming region H5 is enclosed by the transmembrane segments S5 and S6 in the Shaker-type (1P/6TM) and contains the GYGD signature motif which seems to be involved in potassium selectivity (By similarity).</text>
</comment>
<comment type="domain">
    <text evidence="1">The KHA domain (rich in hydrophobic and acidic residues) present in the C-terminal part is likely to be important for tetramerization.</text>
</comment>
<comment type="similarity">
    <text evidence="4">Belongs to the potassium channel family. Plant (TC 1.A.1.4) subfamily.</text>
</comment>
<comment type="sequence caution" evidence="4">
    <conflict type="erroneous initiation">
        <sequence resource="EMBL-CDS" id="BAD45227"/>
    </conflict>
    <text>Extended N-terminus.</text>
</comment>
<comment type="sequence caution" evidence="4">
    <conflict type="erroneous initiation">
        <sequence resource="EMBL-CDS" id="BAD46168"/>
    </conflict>
    <text>Extended N-terminus.</text>
</comment>
<proteinExistence type="inferred from homology"/>
<accession>Q652U9</accession>
<gene>
    <name type="ordered locus">Os06g0254200</name>
    <name type="ordered locus">LOC_Os06g14310</name>
    <name type="ORF">P0046H10.36</name>
    <name type="ORF">P0592E11.6</name>
</gene>
<sequence>MAARSELLRPAFGEASPSLGRFVINPHSCSYRWWHMFLIMLVLYSAWASPFELSMEKAASIALVVTDLVVDVFFAIDIALSFFVAYRDTSTGLLITDRRKITMRYLKRPCFALDVASTIPLQIIYQLVTGKRQGLWGLLNLLRLWRLRRVSKLFARVEKDIRFNYLWTRLIKLLCVTLFALHFAACIYLWMAFNYKIKELTWIGSQIHSFEDRSVWFCYTCAVYWSITTLATVGYGDLHATNIGEMLFSIAFMLFNMGLTSYIIGNITNLVVRETSNTFKMRDMVQRVSEFGRMNRLPEAMREQMLASVQLRFRTDEQLQQEMLSELPKAVRSGVMKHMFKSAIESCYLFQGVSDSLIVQLVAEMKAEFFPPKANVILENETSTDCYIIISGEVEALTTLADGTEKHVKRIGPRGMAGEIGVMFSIPQPFTIRSRRLTQVVRISHIHLLQAVRPNTADGYIVFSNFIQYLESLKVQTKDVAFVSDHLWNGNSMVLRRATEVAVDESKEAAHKMLPCKEPKRVVIHEQLPNATSTALHPSPGKLVLLPDSMQELMKLSEKKFGKAVRGILTVEGAEVEDIEVIRDGDHLLFS</sequence>
<evidence type="ECO:0000250" key="1"/>
<evidence type="ECO:0000255" key="2"/>
<evidence type="ECO:0000255" key="3">
    <source>
        <dbReference type="PROSITE-ProRule" id="PRU00823"/>
    </source>
</evidence>
<evidence type="ECO:0000305" key="4"/>
<protein>
    <recommendedName>
        <fullName>Potassium channel KAT4</fullName>
    </recommendedName>
</protein>
<dbReference type="EMBL" id="AP003490">
    <property type="protein sequence ID" value="BAD45227.1"/>
    <property type="status" value="ALT_INIT"/>
    <property type="molecule type" value="Genomic_DNA"/>
</dbReference>
<dbReference type="EMBL" id="AP005518">
    <property type="protein sequence ID" value="BAD46168.1"/>
    <property type="status" value="ALT_INIT"/>
    <property type="molecule type" value="Genomic_DNA"/>
</dbReference>
<dbReference type="EMBL" id="AP014962">
    <property type="status" value="NOT_ANNOTATED_CDS"/>
    <property type="molecule type" value="Genomic_DNA"/>
</dbReference>
<dbReference type="SMR" id="Q652U9"/>
<dbReference type="FunCoup" id="Q652U9">
    <property type="interactions" value="978"/>
</dbReference>
<dbReference type="STRING" id="39947.Q652U9"/>
<dbReference type="PaxDb" id="39947-Q652U9"/>
<dbReference type="eggNOG" id="KOG0498">
    <property type="taxonomic scope" value="Eukaryota"/>
</dbReference>
<dbReference type="HOGENOM" id="CLU_005746_8_2_1"/>
<dbReference type="InParanoid" id="Q652U9"/>
<dbReference type="Proteomes" id="UP000000763">
    <property type="component" value="Chromosome 6"/>
</dbReference>
<dbReference type="Proteomes" id="UP000059680">
    <property type="component" value="Chromosome 6"/>
</dbReference>
<dbReference type="GO" id="GO:0034702">
    <property type="term" value="C:monoatomic ion channel complex"/>
    <property type="evidence" value="ECO:0007669"/>
    <property type="project" value="UniProtKB-KW"/>
</dbReference>
<dbReference type="GO" id="GO:0005249">
    <property type="term" value="F:voltage-gated potassium channel activity"/>
    <property type="evidence" value="ECO:0007669"/>
    <property type="project" value="InterPro"/>
</dbReference>
<dbReference type="CDD" id="cd00038">
    <property type="entry name" value="CAP_ED"/>
    <property type="match status" value="1"/>
</dbReference>
<dbReference type="FunFam" id="2.60.120.10:FF:000074">
    <property type="entry name" value="Potassium channel KAT2"/>
    <property type="match status" value="1"/>
</dbReference>
<dbReference type="FunFam" id="1.10.287.70:FF:000123">
    <property type="entry name" value="Potassium channel KAT3"/>
    <property type="match status" value="1"/>
</dbReference>
<dbReference type="Gene3D" id="1.10.287.70">
    <property type="match status" value="1"/>
</dbReference>
<dbReference type="Gene3D" id="2.60.120.10">
    <property type="entry name" value="Jelly Rolls"/>
    <property type="match status" value="1"/>
</dbReference>
<dbReference type="InterPro" id="IPR000595">
    <property type="entry name" value="cNMP-bd_dom"/>
</dbReference>
<dbReference type="InterPro" id="IPR018490">
    <property type="entry name" value="cNMP-bd_dom_sf"/>
</dbReference>
<dbReference type="InterPro" id="IPR005821">
    <property type="entry name" value="Ion_trans_dom"/>
</dbReference>
<dbReference type="InterPro" id="IPR003938">
    <property type="entry name" value="K_chnl_volt-dep_EAG/ELK/ERG"/>
</dbReference>
<dbReference type="InterPro" id="IPR045319">
    <property type="entry name" value="KAT/AKT"/>
</dbReference>
<dbReference type="InterPro" id="IPR021789">
    <property type="entry name" value="KHA_dom"/>
</dbReference>
<dbReference type="InterPro" id="IPR014710">
    <property type="entry name" value="RmlC-like_jellyroll"/>
</dbReference>
<dbReference type="PANTHER" id="PTHR45743">
    <property type="entry name" value="POTASSIUM CHANNEL AKT1"/>
    <property type="match status" value="1"/>
</dbReference>
<dbReference type="PANTHER" id="PTHR45743:SF27">
    <property type="entry name" value="POTASSIUM CHANNEL KAT3"/>
    <property type="match status" value="1"/>
</dbReference>
<dbReference type="Pfam" id="PF00027">
    <property type="entry name" value="cNMP_binding"/>
    <property type="match status" value="1"/>
</dbReference>
<dbReference type="Pfam" id="PF00520">
    <property type="entry name" value="Ion_trans"/>
    <property type="match status" value="1"/>
</dbReference>
<dbReference type="Pfam" id="PF11834">
    <property type="entry name" value="KHA"/>
    <property type="match status" value="1"/>
</dbReference>
<dbReference type="PRINTS" id="PR01463">
    <property type="entry name" value="EAGCHANLFMLY"/>
</dbReference>
<dbReference type="SMART" id="SM00100">
    <property type="entry name" value="cNMP"/>
    <property type="match status" value="1"/>
</dbReference>
<dbReference type="SUPFAM" id="SSF51206">
    <property type="entry name" value="cAMP-binding domain-like"/>
    <property type="match status" value="1"/>
</dbReference>
<dbReference type="SUPFAM" id="SSF81324">
    <property type="entry name" value="Voltage-gated potassium channels"/>
    <property type="match status" value="1"/>
</dbReference>
<dbReference type="PROSITE" id="PS50042">
    <property type="entry name" value="CNMP_BINDING_3"/>
    <property type="match status" value="1"/>
</dbReference>
<dbReference type="PROSITE" id="PS51490">
    <property type="entry name" value="KHA"/>
    <property type="match status" value="1"/>
</dbReference>
<feature type="chain" id="PRO_0000410880" description="Potassium channel KAT4">
    <location>
        <begin position="1"/>
        <end position="591"/>
    </location>
</feature>
<feature type="topological domain" description="Cytoplasmic" evidence="2">
    <location>
        <begin position="1"/>
        <end position="32"/>
    </location>
</feature>
<feature type="transmembrane region" description="Helical; Name=Segment S1" evidence="2">
    <location>
        <begin position="33"/>
        <end position="53"/>
    </location>
</feature>
<feature type="topological domain" description="Extracellular" evidence="2">
    <location>
        <begin position="54"/>
        <end position="63"/>
    </location>
</feature>
<feature type="transmembrane region" description="Helical; Name=Segment S2" evidence="2">
    <location>
        <begin position="64"/>
        <end position="84"/>
    </location>
</feature>
<feature type="topological domain" description="Cytoplasmic" evidence="2">
    <location>
        <begin position="85"/>
        <end position="109"/>
    </location>
</feature>
<feature type="transmembrane region" description="Helical; Name=Segment S3" evidence="1">
    <location>
        <begin position="110"/>
        <end position="130"/>
    </location>
</feature>
<feature type="topological domain" description="Extracellular" evidence="2">
    <location>
        <begin position="131"/>
        <end position="137"/>
    </location>
</feature>
<feature type="transmembrane region" description="Helical; Voltage-sensor; Name=Segment S4" evidence="2">
    <location>
        <begin position="138"/>
        <end position="158"/>
    </location>
</feature>
<feature type="topological domain" description="Cytoplasmic" evidence="2">
    <location>
        <begin position="159"/>
        <end position="172"/>
    </location>
</feature>
<feature type="transmembrane region" description="Helical; Name=Segment S5" evidence="2">
    <location>
        <begin position="173"/>
        <end position="193"/>
    </location>
</feature>
<feature type="topological domain" description="Extracellular" evidence="2">
    <location>
        <begin position="194"/>
        <end position="220"/>
    </location>
</feature>
<feature type="intramembrane region" description="Pore-forming; Name=Segment H5" evidence="2">
    <location>
        <begin position="221"/>
        <end position="240"/>
    </location>
</feature>
<feature type="topological domain" description="Extracellular" evidence="2">
    <location>
        <begin position="241"/>
        <end position="246"/>
    </location>
</feature>
<feature type="transmembrane region" description="Helical; Name=Segment S6" evidence="2">
    <location>
        <begin position="247"/>
        <end position="267"/>
    </location>
</feature>
<feature type="topological domain" description="Cytoplasmic" evidence="2">
    <location>
        <begin position="268"/>
        <end position="591"/>
    </location>
</feature>
<feature type="domain" description="KHA" evidence="3">
    <location>
        <begin position="521"/>
        <end position="591"/>
    </location>
</feature>
<feature type="binding site">
    <location>
        <begin position="349"/>
        <end position="469"/>
    </location>
    <ligand>
        <name>a nucleoside 3',5'-cyclic phosphate</name>
        <dbReference type="ChEBI" id="CHEBI:58464"/>
    </ligand>
</feature>
<organism>
    <name type="scientific">Oryza sativa subsp. japonica</name>
    <name type="common">Rice</name>
    <dbReference type="NCBI Taxonomy" id="39947"/>
    <lineage>
        <taxon>Eukaryota</taxon>
        <taxon>Viridiplantae</taxon>
        <taxon>Streptophyta</taxon>
        <taxon>Embryophyta</taxon>
        <taxon>Tracheophyta</taxon>
        <taxon>Spermatophyta</taxon>
        <taxon>Magnoliopsida</taxon>
        <taxon>Liliopsida</taxon>
        <taxon>Poales</taxon>
        <taxon>Poaceae</taxon>
        <taxon>BOP clade</taxon>
        <taxon>Oryzoideae</taxon>
        <taxon>Oryzeae</taxon>
        <taxon>Oryzinae</taxon>
        <taxon>Oryza</taxon>
        <taxon>Oryza sativa</taxon>
    </lineage>
</organism>
<keyword id="KW-0407">Ion channel</keyword>
<keyword id="KW-0406">Ion transport</keyword>
<keyword id="KW-0472">Membrane</keyword>
<keyword id="KW-0630">Potassium</keyword>
<keyword id="KW-0631">Potassium channel</keyword>
<keyword id="KW-0633">Potassium transport</keyword>
<keyword id="KW-1185">Reference proteome</keyword>
<keyword id="KW-0812">Transmembrane</keyword>
<keyword id="KW-1133">Transmembrane helix</keyword>
<keyword id="KW-0813">Transport</keyword>
<keyword id="KW-0851">Voltage-gated channel</keyword>